<reference key="1">
    <citation type="journal article" date="2011" name="J. Bacteriol.">
        <title>Genome sequence of Thermotoga sp. strain RQ2, a hyperthermophilic bacterium isolated from a geothermally heated region of the seafloor near Ribeira Quente, the Azores.</title>
        <authorList>
            <person name="Swithers K.S."/>
            <person name="DiPippo J.L."/>
            <person name="Bruce D.C."/>
            <person name="Detter C."/>
            <person name="Tapia R."/>
            <person name="Han S."/>
            <person name="Saunders E."/>
            <person name="Goodwin L.A."/>
            <person name="Han J."/>
            <person name="Woyke T."/>
            <person name="Pitluck S."/>
            <person name="Pennacchio L."/>
            <person name="Nolan M."/>
            <person name="Mikhailova N."/>
            <person name="Lykidis A."/>
            <person name="Land M.L."/>
            <person name="Brettin T."/>
            <person name="Stetter K.O."/>
            <person name="Nelson K.E."/>
            <person name="Gogarten J.P."/>
            <person name="Noll K.M."/>
        </authorList>
    </citation>
    <scope>NUCLEOTIDE SEQUENCE [LARGE SCALE GENOMIC DNA]</scope>
    <source>
        <strain>RQ2</strain>
    </source>
</reference>
<protein>
    <recommendedName>
        <fullName evidence="1">Orotate phosphoribosyltransferase</fullName>
        <shortName evidence="1">OPRT</shortName>
        <shortName evidence="1">OPRTase</shortName>
        <ecNumber evidence="1">2.4.2.10</ecNumber>
    </recommendedName>
</protein>
<sequence length="187" mass="20485">MIKEILEKTGALMEGHFILSSGKHSSRYVQCARLFEFPEYGDIVGEELAKLLRKYDVETVVGPAMGGVILSYVVARYLKARSLFAERENGVMKLRRGFFVRPGEKAAVVEDVVTTGGSVKEVIELLKEYGANVVCVGSIIDRSGGKVDFGVPFESLLKLDLPVYDPEDCPLCKQGIPAEKPGSRGLK</sequence>
<organism>
    <name type="scientific">Thermotoga sp. (strain RQ2)</name>
    <dbReference type="NCBI Taxonomy" id="126740"/>
    <lineage>
        <taxon>Bacteria</taxon>
        <taxon>Thermotogati</taxon>
        <taxon>Thermotogota</taxon>
        <taxon>Thermotogae</taxon>
        <taxon>Thermotogales</taxon>
        <taxon>Thermotogaceae</taxon>
        <taxon>Thermotoga</taxon>
    </lineage>
</organism>
<keyword id="KW-0328">Glycosyltransferase</keyword>
<keyword id="KW-0460">Magnesium</keyword>
<keyword id="KW-0665">Pyrimidine biosynthesis</keyword>
<keyword id="KW-0808">Transferase</keyword>
<evidence type="ECO:0000255" key="1">
    <source>
        <dbReference type="HAMAP-Rule" id="MF_01208"/>
    </source>
</evidence>
<comment type="function">
    <text evidence="1">Catalyzes the transfer of a ribosyl phosphate group from 5-phosphoribose 1-diphosphate to orotate, leading to the formation of orotidine monophosphate (OMP).</text>
</comment>
<comment type="catalytic activity">
    <reaction evidence="1">
        <text>orotidine 5'-phosphate + diphosphate = orotate + 5-phospho-alpha-D-ribose 1-diphosphate</text>
        <dbReference type="Rhea" id="RHEA:10380"/>
        <dbReference type="ChEBI" id="CHEBI:30839"/>
        <dbReference type="ChEBI" id="CHEBI:33019"/>
        <dbReference type="ChEBI" id="CHEBI:57538"/>
        <dbReference type="ChEBI" id="CHEBI:58017"/>
        <dbReference type="EC" id="2.4.2.10"/>
    </reaction>
</comment>
<comment type="cofactor">
    <cofactor evidence="1">
        <name>Mg(2+)</name>
        <dbReference type="ChEBI" id="CHEBI:18420"/>
    </cofactor>
</comment>
<comment type="pathway">
    <text evidence="1">Pyrimidine metabolism; UMP biosynthesis via de novo pathway; UMP from orotate: step 1/2.</text>
</comment>
<comment type="subunit">
    <text evidence="1">Homodimer.</text>
</comment>
<comment type="similarity">
    <text evidence="1">Belongs to the purine/pyrimidine phosphoribosyltransferase family. PyrE subfamily.</text>
</comment>
<name>PYRE_THESQ</name>
<dbReference type="EC" id="2.4.2.10" evidence="1"/>
<dbReference type="EMBL" id="CP000969">
    <property type="protein sequence ID" value="ACB08955.1"/>
    <property type="molecule type" value="Genomic_DNA"/>
</dbReference>
<dbReference type="RefSeq" id="WP_011943204.1">
    <property type="nucleotide sequence ID" value="NC_010483.1"/>
</dbReference>
<dbReference type="SMR" id="B1L9F7"/>
<dbReference type="KEGG" id="trq:TRQ2_0602"/>
<dbReference type="HOGENOM" id="CLU_074878_3_0_0"/>
<dbReference type="UniPathway" id="UPA00070">
    <property type="reaction ID" value="UER00119"/>
</dbReference>
<dbReference type="Proteomes" id="UP000001687">
    <property type="component" value="Chromosome"/>
</dbReference>
<dbReference type="GO" id="GO:0000287">
    <property type="term" value="F:magnesium ion binding"/>
    <property type="evidence" value="ECO:0007669"/>
    <property type="project" value="UniProtKB-UniRule"/>
</dbReference>
<dbReference type="GO" id="GO:0004588">
    <property type="term" value="F:orotate phosphoribosyltransferase activity"/>
    <property type="evidence" value="ECO:0007669"/>
    <property type="project" value="UniProtKB-UniRule"/>
</dbReference>
<dbReference type="GO" id="GO:0044205">
    <property type="term" value="P:'de novo' UMP biosynthetic process"/>
    <property type="evidence" value="ECO:0007669"/>
    <property type="project" value="UniProtKB-UniRule"/>
</dbReference>
<dbReference type="GO" id="GO:0019856">
    <property type="term" value="P:pyrimidine nucleobase biosynthetic process"/>
    <property type="evidence" value="ECO:0007669"/>
    <property type="project" value="InterPro"/>
</dbReference>
<dbReference type="CDD" id="cd06223">
    <property type="entry name" value="PRTases_typeI"/>
    <property type="match status" value="1"/>
</dbReference>
<dbReference type="Gene3D" id="3.40.50.2020">
    <property type="match status" value="1"/>
</dbReference>
<dbReference type="HAMAP" id="MF_01208">
    <property type="entry name" value="PyrE"/>
    <property type="match status" value="1"/>
</dbReference>
<dbReference type="InterPro" id="IPR023031">
    <property type="entry name" value="OPRT"/>
</dbReference>
<dbReference type="InterPro" id="IPR006273">
    <property type="entry name" value="Orotate_PRibTrfase_bac"/>
</dbReference>
<dbReference type="InterPro" id="IPR000836">
    <property type="entry name" value="PRibTrfase_dom"/>
</dbReference>
<dbReference type="InterPro" id="IPR029057">
    <property type="entry name" value="PRTase-like"/>
</dbReference>
<dbReference type="NCBIfam" id="TIGR01367">
    <property type="entry name" value="pyrE_Therm"/>
    <property type="match status" value="1"/>
</dbReference>
<dbReference type="PANTHER" id="PTHR19278">
    <property type="entry name" value="OROTATE PHOSPHORIBOSYLTRANSFERASE"/>
    <property type="match status" value="1"/>
</dbReference>
<dbReference type="PANTHER" id="PTHR19278:SF9">
    <property type="entry name" value="URIDINE 5'-MONOPHOSPHATE SYNTHASE"/>
    <property type="match status" value="1"/>
</dbReference>
<dbReference type="Pfam" id="PF00156">
    <property type="entry name" value="Pribosyltran"/>
    <property type="match status" value="1"/>
</dbReference>
<dbReference type="SUPFAM" id="SSF53271">
    <property type="entry name" value="PRTase-like"/>
    <property type="match status" value="1"/>
</dbReference>
<accession>B1L9F7</accession>
<proteinExistence type="inferred from homology"/>
<gene>
    <name evidence="1" type="primary">pyrE</name>
    <name type="ordered locus">TRQ2_0602</name>
</gene>
<feature type="chain" id="PRO_1000138839" description="Orotate phosphoribosyltransferase">
    <location>
        <begin position="1"/>
        <end position="187"/>
    </location>
</feature>
<feature type="binding site" evidence="1">
    <location>
        <begin position="110"/>
        <end position="118"/>
    </location>
    <ligand>
        <name>5-phospho-alpha-D-ribose 1-diphosphate</name>
        <dbReference type="ChEBI" id="CHEBI:58017"/>
    </ligand>
</feature>
<feature type="binding site" evidence="1">
    <location>
        <position position="114"/>
    </location>
    <ligand>
        <name>orotate</name>
        <dbReference type="ChEBI" id="CHEBI:30839"/>
    </ligand>
</feature>
<feature type="binding site" evidence="1">
    <location>
        <position position="142"/>
    </location>
    <ligand>
        <name>orotate</name>
        <dbReference type="ChEBI" id="CHEBI:30839"/>
    </ligand>
</feature>